<gene>
    <name evidence="1" type="primary">glnD</name>
    <name type="ordered locus">Psyc_0395</name>
</gene>
<protein>
    <recommendedName>
        <fullName evidence="1">Bifunctional uridylyltransferase/uridylyl-removing enzyme</fullName>
        <shortName evidence="1">UTase/UR</shortName>
    </recommendedName>
    <alternativeName>
        <fullName evidence="1">Bifunctional [protein-PII] modification enzyme</fullName>
    </alternativeName>
    <alternativeName>
        <fullName evidence="1">Bifunctional nitrogen sensor protein</fullName>
    </alternativeName>
    <domain>
        <recommendedName>
            <fullName evidence="1">[Protein-PII] uridylyltransferase</fullName>
            <shortName evidence="1">PII uridylyltransferase</shortName>
            <shortName evidence="1">UTase</shortName>
            <ecNumber evidence="1">2.7.7.59</ecNumber>
        </recommendedName>
    </domain>
    <domain>
        <recommendedName>
            <fullName evidence="1">[Protein-PII]-UMP uridylyl-removing enzyme</fullName>
            <shortName evidence="1">UR</shortName>
            <ecNumber evidence="1">3.1.4.-</ecNumber>
        </recommendedName>
    </domain>
</protein>
<accession>Q4FUP5</accession>
<feature type="chain" id="PRO_0000231688" description="Bifunctional uridylyltransferase/uridylyl-removing enzyme">
    <location>
        <begin position="1"/>
        <end position="915"/>
    </location>
</feature>
<feature type="domain" description="HD" evidence="2">
    <location>
        <begin position="478"/>
        <end position="594"/>
    </location>
</feature>
<feature type="domain" description="ACT 1" evidence="1">
    <location>
        <begin position="732"/>
        <end position="817"/>
    </location>
</feature>
<feature type="domain" description="ACT 2" evidence="1">
    <location>
        <begin position="840"/>
        <end position="915"/>
    </location>
</feature>
<feature type="region of interest" description="Uridylyltransferase">
    <location>
        <begin position="1"/>
        <end position="360"/>
    </location>
</feature>
<feature type="region of interest" description="Uridylyl-removing">
    <location>
        <begin position="361"/>
        <end position="731"/>
    </location>
</feature>
<reference key="1">
    <citation type="journal article" date="2010" name="Appl. Environ. Microbiol.">
        <title>The genome sequence of Psychrobacter arcticus 273-4, a psychroactive Siberian permafrost bacterium, reveals mechanisms for adaptation to low-temperature growth.</title>
        <authorList>
            <person name="Ayala-del-Rio H.L."/>
            <person name="Chain P.S."/>
            <person name="Grzymski J.J."/>
            <person name="Ponder M.A."/>
            <person name="Ivanova N."/>
            <person name="Bergholz P.W."/>
            <person name="Di Bartolo G."/>
            <person name="Hauser L."/>
            <person name="Land M."/>
            <person name="Bakermans C."/>
            <person name="Rodrigues D."/>
            <person name="Klappenbach J."/>
            <person name="Zarka D."/>
            <person name="Larimer F."/>
            <person name="Richardson P."/>
            <person name="Murray A."/>
            <person name="Thomashow M."/>
            <person name="Tiedje J.M."/>
        </authorList>
    </citation>
    <scope>NUCLEOTIDE SEQUENCE [LARGE SCALE GENOMIC DNA]</scope>
    <source>
        <strain>DSM 17307 / VKM B-2377 / 273-4</strain>
    </source>
</reference>
<name>GLND_PSYA2</name>
<evidence type="ECO:0000255" key="1">
    <source>
        <dbReference type="HAMAP-Rule" id="MF_00277"/>
    </source>
</evidence>
<evidence type="ECO:0000255" key="2">
    <source>
        <dbReference type="PROSITE-ProRule" id="PRU01175"/>
    </source>
</evidence>
<comment type="function">
    <text evidence="1">Modifies, by uridylylation and deuridylylation, the PII regulatory proteins (GlnB and homologs), in response to the nitrogen status of the cell that GlnD senses through the glutamine level. Under low glutamine levels, catalyzes the conversion of the PII proteins and UTP to PII-UMP and PPi, while under higher glutamine levels, GlnD hydrolyzes PII-UMP to PII and UMP (deuridylylation). Thus, controls uridylylation state and activity of the PII proteins, and plays an important role in the regulation of nitrogen assimilation and metabolism.</text>
</comment>
<comment type="catalytic activity">
    <reaction evidence="1">
        <text>[protein-PII]-L-tyrosine + UTP = [protein-PII]-uridylyl-L-tyrosine + diphosphate</text>
        <dbReference type="Rhea" id="RHEA:13673"/>
        <dbReference type="Rhea" id="RHEA-COMP:12147"/>
        <dbReference type="Rhea" id="RHEA-COMP:12148"/>
        <dbReference type="ChEBI" id="CHEBI:33019"/>
        <dbReference type="ChEBI" id="CHEBI:46398"/>
        <dbReference type="ChEBI" id="CHEBI:46858"/>
        <dbReference type="ChEBI" id="CHEBI:90602"/>
        <dbReference type="EC" id="2.7.7.59"/>
    </reaction>
</comment>
<comment type="catalytic activity">
    <reaction evidence="1">
        <text>[protein-PII]-uridylyl-L-tyrosine + H2O = [protein-PII]-L-tyrosine + UMP + H(+)</text>
        <dbReference type="Rhea" id="RHEA:48600"/>
        <dbReference type="Rhea" id="RHEA-COMP:12147"/>
        <dbReference type="Rhea" id="RHEA-COMP:12148"/>
        <dbReference type="ChEBI" id="CHEBI:15377"/>
        <dbReference type="ChEBI" id="CHEBI:15378"/>
        <dbReference type="ChEBI" id="CHEBI:46858"/>
        <dbReference type="ChEBI" id="CHEBI:57865"/>
        <dbReference type="ChEBI" id="CHEBI:90602"/>
    </reaction>
</comment>
<comment type="cofactor">
    <cofactor evidence="1">
        <name>Mg(2+)</name>
        <dbReference type="ChEBI" id="CHEBI:18420"/>
    </cofactor>
</comment>
<comment type="activity regulation">
    <text evidence="1">Uridylyltransferase (UTase) activity is inhibited by glutamine, while glutamine activates uridylyl-removing (UR) activity.</text>
</comment>
<comment type="domain">
    <text evidence="1">Has four distinct domains: an N-terminal nucleotidyltransferase (NT) domain responsible for UTase activity, a central HD domain that encodes UR activity, and two C-terminal ACT domains that seem to have a role in glutamine sensing.</text>
</comment>
<comment type="similarity">
    <text evidence="1">Belongs to the GlnD family.</text>
</comment>
<organism>
    <name type="scientific">Psychrobacter arcticus (strain DSM 17307 / VKM B-2377 / 273-4)</name>
    <dbReference type="NCBI Taxonomy" id="259536"/>
    <lineage>
        <taxon>Bacteria</taxon>
        <taxon>Pseudomonadati</taxon>
        <taxon>Pseudomonadota</taxon>
        <taxon>Gammaproteobacteria</taxon>
        <taxon>Moraxellales</taxon>
        <taxon>Moraxellaceae</taxon>
        <taxon>Psychrobacter</taxon>
    </lineage>
</organism>
<dbReference type="EC" id="2.7.7.59" evidence="1"/>
<dbReference type="EC" id="3.1.4.-" evidence="1"/>
<dbReference type="EMBL" id="CP000082">
    <property type="protein sequence ID" value="AAZ18263.1"/>
    <property type="molecule type" value="Genomic_DNA"/>
</dbReference>
<dbReference type="RefSeq" id="WP_011279701.1">
    <property type="nucleotide sequence ID" value="NC_007204.1"/>
</dbReference>
<dbReference type="SMR" id="Q4FUP5"/>
<dbReference type="STRING" id="259536.Psyc_0395"/>
<dbReference type="KEGG" id="par:Psyc_0395"/>
<dbReference type="eggNOG" id="COG2844">
    <property type="taxonomic scope" value="Bacteria"/>
</dbReference>
<dbReference type="HOGENOM" id="CLU_012833_0_0_6"/>
<dbReference type="OrthoDB" id="9758038at2"/>
<dbReference type="Proteomes" id="UP000000546">
    <property type="component" value="Chromosome"/>
</dbReference>
<dbReference type="GO" id="GO:0008773">
    <property type="term" value="F:[protein-PII] uridylyltransferase activity"/>
    <property type="evidence" value="ECO:0007669"/>
    <property type="project" value="UniProtKB-UniRule"/>
</dbReference>
<dbReference type="GO" id="GO:0008081">
    <property type="term" value="F:phosphoric diester hydrolase activity"/>
    <property type="evidence" value="ECO:0007669"/>
    <property type="project" value="UniProtKB-UniRule"/>
</dbReference>
<dbReference type="GO" id="GO:0006808">
    <property type="term" value="P:regulation of nitrogen utilization"/>
    <property type="evidence" value="ECO:0007669"/>
    <property type="project" value="UniProtKB-UniRule"/>
</dbReference>
<dbReference type="CDD" id="cd04899">
    <property type="entry name" value="ACT_ACR-UUR-like_2"/>
    <property type="match status" value="1"/>
</dbReference>
<dbReference type="CDD" id="cd04900">
    <property type="entry name" value="ACT_UUR-like_1"/>
    <property type="match status" value="1"/>
</dbReference>
<dbReference type="CDD" id="cd05401">
    <property type="entry name" value="NT_GlnE_GlnD_like"/>
    <property type="match status" value="1"/>
</dbReference>
<dbReference type="HAMAP" id="MF_00277">
    <property type="entry name" value="PII_uridylyl_transf"/>
    <property type="match status" value="1"/>
</dbReference>
<dbReference type="InterPro" id="IPR045865">
    <property type="entry name" value="ACT-like_dom_sf"/>
</dbReference>
<dbReference type="InterPro" id="IPR002912">
    <property type="entry name" value="ACT_dom"/>
</dbReference>
<dbReference type="InterPro" id="IPR003607">
    <property type="entry name" value="HD/PDEase_dom"/>
</dbReference>
<dbReference type="InterPro" id="IPR006674">
    <property type="entry name" value="HD_domain"/>
</dbReference>
<dbReference type="InterPro" id="IPR043519">
    <property type="entry name" value="NT_sf"/>
</dbReference>
<dbReference type="InterPro" id="IPR013546">
    <property type="entry name" value="PII_UdlTrfase/GS_AdlTrfase"/>
</dbReference>
<dbReference type="InterPro" id="IPR002934">
    <property type="entry name" value="Polymerase_NTP_transf_dom"/>
</dbReference>
<dbReference type="InterPro" id="IPR010043">
    <property type="entry name" value="UTase/UR"/>
</dbReference>
<dbReference type="NCBIfam" id="TIGR01693">
    <property type="entry name" value="UTase_glnD"/>
    <property type="match status" value="1"/>
</dbReference>
<dbReference type="PANTHER" id="PTHR47320">
    <property type="entry name" value="BIFUNCTIONAL URIDYLYLTRANSFERASE/URIDYLYL-REMOVING ENZYME"/>
    <property type="match status" value="1"/>
</dbReference>
<dbReference type="PANTHER" id="PTHR47320:SF1">
    <property type="entry name" value="BIFUNCTIONAL URIDYLYLTRANSFERASE_URIDYLYL-REMOVING ENZYME"/>
    <property type="match status" value="1"/>
</dbReference>
<dbReference type="Pfam" id="PF08335">
    <property type="entry name" value="GlnD_UR_UTase"/>
    <property type="match status" value="1"/>
</dbReference>
<dbReference type="Pfam" id="PF01909">
    <property type="entry name" value="NTP_transf_2"/>
    <property type="match status" value="1"/>
</dbReference>
<dbReference type="PIRSF" id="PIRSF006288">
    <property type="entry name" value="PII_uridyltransf"/>
    <property type="match status" value="1"/>
</dbReference>
<dbReference type="SMART" id="SM00471">
    <property type="entry name" value="HDc"/>
    <property type="match status" value="1"/>
</dbReference>
<dbReference type="SUPFAM" id="SSF55021">
    <property type="entry name" value="ACT-like"/>
    <property type="match status" value="1"/>
</dbReference>
<dbReference type="SUPFAM" id="SSF109604">
    <property type="entry name" value="HD-domain/PDEase-like"/>
    <property type="match status" value="1"/>
</dbReference>
<dbReference type="SUPFAM" id="SSF81301">
    <property type="entry name" value="Nucleotidyltransferase"/>
    <property type="match status" value="1"/>
</dbReference>
<dbReference type="SUPFAM" id="SSF81593">
    <property type="entry name" value="Nucleotidyltransferase substrate binding subunit/domain"/>
    <property type="match status" value="1"/>
</dbReference>
<dbReference type="PROSITE" id="PS51671">
    <property type="entry name" value="ACT"/>
    <property type="match status" value="2"/>
</dbReference>
<dbReference type="PROSITE" id="PS51831">
    <property type="entry name" value="HD"/>
    <property type="match status" value="1"/>
</dbReference>
<proteinExistence type="inferred from homology"/>
<keyword id="KW-0378">Hydrolase</keyword>
<keyword id="KW-0460">Magnesium</keyword>
<keyword id="KW-0511">Multifunctional enzyme</keyword>
<keyword id="KW-0548">Nucleotidyltransferase</keyword>
<keyword id="KW-1185">Reference proteome</keyword>
<keyword id="KW-0677">Repeat</keyword>
<keyword id="KW-0808">Transferase</keyword>
<sequence length="915" mass="104846">MFNCAVTAIDLTPMPLLSTDNMTTAPLSLSTDTSLIEKSLFGIPEWLLQINDDISRALERGVNIRQLVSARACVIDDLLIGLFKWFELDKTDLALFATGGYGRGELSLHSDIDILLLMPHEIDADTSSKIDNLVALLWDIGLEPALSVRSVSECLEAALDHTIASALLEARLLIGNETLQDVPHQIVNNQWSPRAFYDVKIDEAKARYLQHNATEYNLEPNIKTAPGGLRDIHIVGWVTKRYFRVSKLYDLVQQNFLTEKEFDELSFSEGYLWQIRHYLHELTGRNENKLLFDYQREIAQLMGYDTQPDDQPNAAVERFMRDYYRCAMQISTLSEMLTNHYYETIIEPQLPDEERPKKQPINARFNQVGEQIAMAHHRVFAQHPESILEMFLLMGQYGIKNVRTHTLRALKIAARGIDQAYRDNPTHQTLFLANLKEQNYLFHRLRTMNRYGVLGNYIPAFAQVTGLMQYDLFHRYTVDAHTLFLIRILHRFIDPHFYEDFPLVSSIFQRIERKEILVLAAMFHDIAKGRGGNHSQLGEIESIEFCLAHGMSNADANLVGWLTRYHLLMSMTAQKKDISDPEVVTLFADLVGNVTHLNHLYVLTVADMNATNPQLWNSWRATLMKQLYSQTRRILRADIDAPTNRQDMISATRKQALMMLDNVDNQHMNRDEVLSLWDDLGDEYFLREIAEDILWHTEAILNHPPIGRASNADSPPLVVLREHRELALDAVQVFVYTQDQVNLFAVTMAVFDQMNLDVLDARIITATRDFALDSYVLLDRSGTLLVDSDSQQELKQRLIDAFKNPTAPKLTHKRIPRQLKHFDVETTINFEFNDASSQHIMSLETLDQPGLLARVGQVFLQQQIEVHAARITTLGERAEDMFYISDQNDQALSANKLKTLKTALIESLSVHNDSI</sequence>